<proteinExistence type="evidence at protein level"/>
<sequence length="439" mass="49124">MPAIAVLAAAAAAWCFLQVESRHLDALAGGAGPNHGNFLDNDQWLSTVSQYDRDKYWNRFRDDDYFRNWNPNKPFDQALDPSKDPCLKVKCSPHKVCVTQDYQTALCVSRKHLLPRQKKGNVAQKHWVGPSNLVKCKPCPVAQSAMVCGSDGHSYTSKCKLEFHACSTGKSLATLCDGPCPCLPEPEPPKHKAERSACTDKELRNLASRLKDWFGALHEDANRVIKPTSSNTAQGRFDTSILPICKDSLGWMFNKLDMNYDLLLDPSEINAIYLDKYEPCIKPLFNSCDSFKDGKLSNNEWCYCFQKPGGLPCQNEMNRIQKLSKGKSLLGAFIPRCNEEGYYKATQCHGSTGQCWCVDKYGNELAGSRKQGAVSCEEEQETSGDFGSGGSVVLLDDLEYERELGPKDKEGKLRVHTRAVTEDDEDEDDDKEDEVGYIW</sequence>
<evidence type="ECO:0000250" key="1"/>
<evidence type="ECO:0000255" key="2"/>
<evidence type="ECO:0000255" key="3">
    <source>
        <dbReference type="PROSITE-ProRule" id="PRU00500"/>
    </source>
</evidence>
<evidence type="ECO:0000255" key="4">
    <source>
        <dbReference type="PROSITE-ProRule" id="PRU00798"/>
    </source>
</evidence>
<evidence type="ECO:0000256" key="5">
    <source>
        <dbReference type="SAM" id="MobiDB-lite"/>
    </source>
</evidence>
<evidence type="ECO:0000269" key="6">
    <source>
    </source>
</evidence>
<evidence type="ECO:0000269" key="7">
    <source>
    </source>
</evidence>
<evidence type="ECO:0000305" key="8"/>
<organism>
    <name type="scientific">Homo sapiens</name>
    <name type="common">Human</name>
    <dbReference type="NCBI Taxonomy" id="9606"/>
    <lineage>
        <taxon>Eukaryota</taxon>
        <taxon>Metazoa</taxon>
        <taxon>Chordata</taxon>
        <taxon>Craniata</taxon>
        <taxon>Vertebrata</taxon>
        <taxon>Euteleostomi</taxon>
        <taxon>Mammalia</taxon>
        <taxon>Eutheria</taxon>
        <taxon>Euarchontoglires</taxon>
        <taxon>Primates</taxon>
        <taxon>Haplorrhini</taxon>
        <taxon>Catarrhini</taxon>
        <taxon>Hominidae</taxon>
        <taxon>Homo</taxon>
    </lineage>
</organism>
<keyword id="KW-0903">Direct protein sequencing</keyword>
<keyword id="KW-1015">Disulfide bond</keyword>
<keyword id="KW-0272">Extracellular matrix</keyword>
<keyword id="KW-0325">Glycoprotein</keyword>
<keyword id="KW-0357">Heparan sulfate</keyword>
<keyword id="KW-0654">Proteoglycan</keyword>
<keyword id="KW-1267">Proteomics identification</keyword>
<keyword id="KW-1185">Reference proteome</keyword>
<keyword id="KW-0964">Secreted</keyword>
<keyword id="KW-0732">Signal</keyword>
<comment type="function">
    <text>May play a role in cell-cell and cell-matrix interactions. May contribute to various neuronal mechanisms in the central nervous system.</text>
</comment>
<comment type="interaction">
    <interactant intactId="EBI-2682560">
        <id>Q08629</id>
    </interactant>
    <interactant intactId="EBI-747430">
        <id>Q9BXK5</id>
        <label>BCL2L13</label>
    </interactant>
    <organismsDiffer>false</organismsDiffer>
    <experiments>3</experiments>
</comment>
<comment type="interaction">
    <interactant intactId="EBI-2682560">
        <id>Q08629</id>
    </interactant>
    <interactant intactId="EBI-6942903">
        <id>Q96BA8</id>
        <label>CREB3L1</label>
    </interactant>
    <organismsDiffer>false</organismsDiffer>
    <experiments>3</experiments>
</comment>
<comment type="subcellular location">
    <subcellularLocation>
        <location>Secreted</location>
        <location>Extracellular space</location>
        <location>Extracellular matrix</location>
    </subcellularLocation>
</comment>
<comment type="PTM">
    <text evidence="6 7">O-glycosylated. Glycosaminoglycan that contains chondroitin sulfate and heparan sulfate.</text>
</comment>
<comment type="sequence caution" evidence="8">
    <conflict type="erroneous initiation">
        <sequence resource="EMBL-CDS" id="BAD92938"/>
    </conflict>
    <text>Extended N-terminus.</text>
</comment>
<dbReference type="EMBL" id="X73608">
    <property type="protein sequence ID" value="CAA51999.1"/>
    <property type="molecule type" value="mRNA"/>
</dbReference>
<dbReference type="EMBL" id="AF231124">
    <property type="protein sequence ID" value="AAF43687.1"/>
    <property type="molecule type" value="mRNA"/>
</dbReference>
<dbReference type="EMBL" id="AK094489">
    <property type="protein sequence ID" value="BAG52875.1"/>
    <property type="molecule type" value="mRNA"/>
</dbReference>
<dbReference type="EMBL" id="AB209701">
    <property type="protein sequence ID" value="BAD92938.1"/>
    <property type="status" value="ALT_INIT"/>
    <property type="molecule type" value="mRNA"/>
</dbReference>
<dbReference type="EMBL" id="AC005213">
    <property type="protein sequence ID" value="AAC24945.1"/>
    <property type="molecule type" value="Genomic_DNA"/>
</dbReference>
<dbReference type="EMBL" id="AC091818">
    <property type="status" value="NOT_ANNOTATED_CDS"/>
    <property type="molecule type" value="Genomic_DNA"/>
</dbReference>
<dbReference type="EMBL" id="AC106746">
    <property type="status" value="NOT_ANNOTATED_CDS"/>
    <property type="molecule type" value="Genomic_DNA"/>
</dbReference>
<dbReference type="EMBL" id="AC106809">
    <property type="status" value="NOT_ANNOTATED_CDS"/>
    <property type="molecule type" value="Genomic_DNA"/>
</dbReference>
<dbReference type="EMBL" id="BC030691">
    <property type="protein sequence ID" value="AAH30691.1"/>
    <property type="molecule type" value="mRNA"/>
</dbReference>
<dbReference type="CCDS" id="CCDS4191.1"/>
<dbReference type="PIR" id="S33293">
    <property type="entry name" value="S33293"/>
</dbReference>
<dbReference type="RefSeq" id="NP_004589.1">
    <property type="nucleotide sequence ID" value="NM_004598.4"/>
</dbReference>
<dbReference type="SMR" id="Q08629"/>
<dbReference type="BioGRID" id="112573">
    <property type="interactions" value="10"/>
</dbReference>
<dbReference type="FunCoup" id="Q08629">
    <property type="interactions" value="495"/>
</dbReference>
<dbReference type="IntAct" id="Q08629">
    <property type="interactions" value="5"/>
</dbReference>
<dbReference type="STRING" id="9606.ENSP00000378401"/>
<dbReference type="MEROPS" id="I31.006"/>
<dbReference type="GlyConnect" id="719">
    <property type="glycosylation" value="1 O-Linked glycan (1 site)"/>
</dbReference>
<dbReference type="GlyCosmos" id="Q08629">
    <property type="glycosylation" value="3 sites, 2 glycans"/>
</dbReference>
<dbReference type="GlyGen" id="Q08629">
    <property type="glycosylation" value="7 sites, 3 O-linked glycans (3 sites)"/>
</dbReference>
<dbReference type="iPTMnet" id="Q08629"/>
<dbReference type="PhosphoSitePlus" id="Q08629"/>
<dbReference type="BioMuta" id="SPOCK1"/>
<dbReference type="DMDM" id="24212472"/>
<dbReference type="jPOST" id="Q08629"/>
<dbReference type="MassIVE" id="Q08629"/>
<dbReference type="PaxDb" id="9606-ENSP00000378401"/>
<dbReference type="PeptideAtlas" id="Q08629"/>
<dbReference type="ProteomicsDB" id="58637"/>
<dbReference type="TopDownProteomics" id="Q08629"/>
<dbReference type="Antibodypedia" id="26517">
    <property type="antibodies" value="123 antibodies from 22 providers"/>
</dbReference>
<dbReference type="DNASU" id="6695"/>
<dbReference type="Ensembl" id="ENST00000394945.6">
    <property type="protein sequence ID" value="ENSP00000378401.1"/>
    <property type="gene ID" value="ENSG00000152377.15"/>
</dbReference>
<dbReference type="GeneID" id="6695"/>
<dbReference type="KEGG" id="hsa:6695"/>
<dbReference type="MANE-Select" id="ENST00000394945.6">
    <property type="protein sequence ID" value="ENSP00000378401.1"/>
    <property type="RefSeq nucleotide sequence ID" value="NM_004598.4"/>
    <property type="RefSeq protein sequence ID" value="NP_004589.1"/>
</dbReference>
<dbReference type="UCSC" id="uc003lbp.4">
    <property type="organism name" value="human"/>
</dbReference>
<dbReference type="AGR" id="HGNC:11251"/>
<dbReference type="CTD" id="6695"/>
<dbReference type="DisGeNET" id="6695"/>
<dbReference type="GeneCards" id="SPOCK1"/>
<dbReference type="HGNC" id="HGNC:11251">
    <property type="gene designation" value="SPOCK1"/>
</dbReference>
<dbReference type="HPA" id="ENSG00000152377">
    <property type="expression patterns" value="Tissue enhanced (brain)"/>
</dbReference>
<dbReference type="MalaCards" id="SPOCK1"/>
<dbReference type="MIM" id="602264">
    <property type="type" value="gene"/>
</dbReference>
<dbReference type="neXtProt" id="NX_Q08629"/>
<dbReference type="OpenTargets" id="ENSG00000152377"/>
<dbReference type="PharmGKB" id="PA36081"/>
<dbReference type="VEuPathDB" id="HostDB:ENSG00000152377"/>
<dbReference type="eggNOG" id="KOG3555">
    <property type="taxonomic scope" value="Eukaryota"/>
</dbReference>
<dbReference type="GeneTree" id="ENSGT00940000158371"/>
<dbReference type="InParanoid" id="Q08629"/>
<dbReference type="OMA" id="IPRCNDE"/>
<dbReference type="OrthoDB" id="8875634at2759"/>
<dbReference type="PAN-GO" id="Q08629">
    <property type="GO annotations" value="0 GO annotations based on evolutionary models"/>
</dbReference>
<dbReference type="PhylomeDB" id="Q08629"/>
<dbReference type="TreeFam" id="TF317779"/>
<dbReference type="PathwayCommons" id="Q08629"/>
<dbReference type="SignaLink" id="Q08629"/>
<dbReference type="BioGRID-ORCS" id="6695">
    <property type="hits" value="8 hits in 1144 CRISPR screens"/>
</dbReference>
<dbReference type="ChiTaRS" id="SPOCK1">
    <property type="organism name" value="human"/>
</dbReference>
<dbReference type="GeneWiki" id="SPOCK1"/>
<dbReference type="GenomeRNAi" id="6695"/>
<dbReference type="Pharos" id="Q08629">
    <property type="development level" value="Tbio"/>
</dbReference>
<dbReference type="PRO" id="PR:Q08629"/>
<dbReference type="Proteomes" id="UP000005640">
    <property type="component" value="Chromosome 5"/>
</dbReference>
<dbReference type="RNAct" id="Q08629">
    <property type="molecule type" value="protein"/>
</dbReference>
<dbReference type="Bgee" id="ENSG00000152377">
    <property type="expression patterns" value="Expressed in stromal cell of endometrium and 191 other cell types or tissues"/>
</dbReference>
<dbReference type="ExpressionAtlas" id="Q08629">
    <property type="expression patterns" value="baseline and differential"/>
</dbReference>
<dbReference type="GO" id="GO:0062023">
    <property type="term" value="C:collagen-containing extracellular matrix"/>
    <property type="evidence" value="ECO:0007005"/>
    <property type="project" value="GO_Central"/>
</dbReference>
<dbReference type="GO" id="GO:0005737">
    <property type="term" value="C:cytoplasm"/>
    <property type="evidence" value="ECO:0000250"/>
    <property type="project" value="UniProtKB"/>
</dbReference>
<dbReference type="GO" id="GO:0031012">
    <property type="term" value="C:extracellular matrix"/>
    <property type="evidence" value="ECO:0007005"/>
    <property type="project" value="GO_Central"/>
</dbReference>
<dbReference type="GO" id="GO:0005615">
    <property type="term" value="C:extracellular space"/>
    <property type="evidence" value="ECO:0000314"/>
    <property type="project" value="UniProtKB"/>
</dbReference>
<dbReference type="GO" id="GO:0031594">
    <property type="term" value="C:neuromuscular junction"/>
    <property type="evidence" value="ECO:0000250"/>
    <property type="project" value="UniProtKB"/>
</dbReference>
<dbReference type="GO" id="GO:0033268">
    <property type="term" value="C:node of Ranvier"/>
    <property type="evidence" value="ECO:0000250"/>
    <property type="project" value="UniProtKB"/>
</dbReference>
<dbReference type="GO" id="GO:0014069">
    <property type="term" value="C:postsynaptic density"/>
    <property type="evidence" value="ECO:0000303"/>
    <property type="project" value="UniProtKB"/>
</dbReference>
<dbReference type="GO" id="GO:0016528">
    <property type="term" value="C:sarcoplasm"/>
    <property type="evidence" value="ECO:0000250"/>
    <property type="project" value="UniProtKB"/>
</dbReference>
<dbReference type="GO" id="GO:0005509">
    <property type="term" value="F:calcium ion binding"/>
    <property type="evidence" value="ECO:0000314"/>
    <property type="project" value="UniProtKB"/>
</dbReference>
<dbReference type="GO" id="GO:0005518">
    <property type="term" value="F:collagen binding"/>
    <property type="evidence" value="ECO:0000318"/>
    <property type="project" value="GO_Central"/>
</dbReference>
<dbReference type="GO" id="GO:0004869">
    <property type="term" value="F:cysteine-type endopeptidase inhibitor activity"/>
    <property type="evidence" value="ECO:0000314"/>
    <property type="project" value="UniProtKB"/>
</dbReference>
<dbReference type="GO" id="GO:0050840">
    <property type="term" value="F:extracellular matrix binding"/>
    <property type="evidence" value="ECO:0000318"/>
    <property type="project" value="GO_Central"/>
</dbReference>
<dbReference type="GO" id="GO:0005201">
    <property type="term" value="F:extracellular matrix structural constituent"/>
    <property type="evidence" value="ECO:0007005"/>
    <property type="project" value="GO_Central"/>
</dbReference>
<dbReference type="GO" id="GO:0008191">
    <property type="term" value="F:metalloendopeptidase inhibitor activity"/>
    <property type="evidence" value="ECO:0000314"/>
    <property type="project" value="UniProtKB"/>
</dbReference>
<dbReference type="GO" id="GO:0004867">
    <property type="term" value="F:serine-type endopeptidase inhibitor activity"/>
    <property type="evidence" value="ECO:0000303"/>
    <property type="project" value="UniProtKB"/>
</dbReference>
<dbReference type="GO" id="GO:0007155">
    <property type="term" value="P:cell adhesion"/>
    <property type="evidence" value="ECO:0000303"/>
    <property type="project" value="UniProtKB"/>
</dbReference>
<dbReference type="GO" id="GO:0021953">
    <property type="term" value="P:central nervous system neuron differentiation"/>
    <property type="evidence" value="ECO:0000250"/>
    <property type="project" value="UniProtKB"/>
</dbReference>
<dbReference type="GO" id="GO:0010812">
    <property type="term" value="P:negative regulation of cell-substrate adhesion"/>
    <property type="evidence" value="ECO:0000314"/>
    <property type="project" value="UniProtKB"/>
</dbReference>
<dbReference type="GO" id="GO:0010977">
    <property type="term" value="P:negative regulation of neuron projection development"/>
    <property type="evidence" value="ECO:0000314"/>
    <property type="project" value="UniProtKB"/>
</dbReference>
<dbReference type="GO" id="GO:0007399">
    <property type="term" value="P:nervous system development"/>
    <property type="evidence" value="ECO:0000303"/>
    <property type="project" value="UniProtKB"/>
</dbReference>
<dbReference type="GO" id="GO:0022008">
    <property type="term" value="P:neurogenesis"/>
    <property type="evidence" value="ECO:0000250"/>
    <property type="project" value="UniProtKB"/>
</dbReference>
<dbReference type="GO" id="GO:0001764">
    <property type="term" value="P:neuron migration"/>
    <property type="evidence" value="ECO:0000250"/>
    <property type="project" value="UniProtKB"/>
</dbReference>
<dbReference type="GO" id="GO:0001558">
    <property type="term" value="P:regulation of cell growth"/>
    <property type="evidence" value="ECO:0000303"/>
    <property type="project" value="UniProtKB"/>
</dbReference>
<dbReference type="CDD" id="cd16237">
    <property type="entry name" value="EFh_SPARC_TICN1"/>
    <property type="match status" value="1"/>
</dbReference>
<dbReference type="CDD" id="cd00104">
    <property type="entry name" value="KAZAL_FS"/>
    <property type="match status" value="1"/>
</dbReference>
<dbReference type="CDD" id="cd00191">
    <property type="entry name" value="TY"/>
    <property type="match status" value="1"/>
</dbReference>
<dbReference type="FunFam" id="1.10.238.10:FF:000053">
    <property type="entry name" value="Putative testican-3 isoform 3"/>
    <property type="match status" value="1"/>
</dbReference>
<dbReference type="FunFam" id="3.30.60.30:FF:000003">
    <property type="entry name" value="SPARC/osteonectin, cwcv and kazal-like domains proteoglycan 3"/>
    <property type="match status" value="1"/>
</dbReference>
<dbReference type="FunFam" id="4.10.800.10:FF:000006">
    <property type="entry name" value="testican-1 isoform X2"/>
    <property type="match status" value="1"/>
</dbReference>
<dbReference type="Gene3D" id="3.30.60.30">
    <property type="match status" value="1"/>
</dbReference>
<dbReference type="Gene3D" id="1.10.238.10">
    <property type="entry name" value="EF-hand"/>
    <property type="match status" value="1"/>
</dbReference>
<dbReference type="Gene3D" id="4.10.800.10">
    <property type="entry name" value="Thyroglobulin type-1"/>
    <property type="match status" value="1"/>
</dbReference>
<dbReference type="InterPro" id="IPR011992">
    <property type="entry name" value="EF-hand-dom_pair"/>
</dbReference>
<dbReference type="InterPro" id="IPR002350">
    <property type="entry name" value="Kazal_dom"/>
</dbReference>
<dbReference type="InterPro" id="IPR036058">
    <property type="entry name" value="Kazal_dom_sf"/>
</dbReference>
<dbReference type="InterPro" id="IPR019577">
    <property type="entry name" value="SPARC/Testican_Ca-bd-dom"/>
</dbReference>
<dbReference type="InterPro" id="IPR000716">
    <property type="entry name" value="Thyroglobulin_1"/>
</dbReference>
<dbReference type="InterPro" id="IPR036857">
    <property type="entry name" value="Thyroglobulin_1_sf"/>
</dbReference>
<dbReference type="PANTHER" id="PTHR13866">
    <property type="entry name" value="SPARC OSTEONECTIN"/>
    <property type="match status" value="1"/>
</dbReference>
<dbReference type="PANTHER" id="PTHR13866:SF17">
    <property type="entry name" value="TESTICAN-1"/>
    <property type="match status" value="1"/>
</dbReference>
<dbReference type="Pfam" id="PF07648">
    <property type="entry name" value="Kazal_2"/>
    <property type="match status" value="1"/>
</dbReference>
<dbReference type="Pfam" id="PF10591">
    <property type="entry name" value="SPARC_Ca_bdg"/>
    <property type="match status" value="1"/>
</dbReference>
<dbReference type="Pfam" id="PF00086">
    <property type="entry name" value="Thyroglobulin_1"/>
    <property type="match status" value="1"/>
</dbReference>
<dbReference type="SMART" id="SM00280">
    <property type="entry name" value="KAZAL"/>
    <property type="match status" value="1"/>
</dbReference>
<dbReference type="SMART" id="SM00211">
    <property type="entry name" value="TY"/>
    <property type="match status" value="1"/>
</dbReference>
<dbReference type="SUPFAM" id="SSF47473">
    <property type="entry name" value="EF-hand"/>
    <property type="match status" value="1"/>
</dbReference>
<dbReference type="SUPFAM" id="SSF100895">
    <property type="entry name" value="Kazal-type serine protease inhibitors"/>
    <property type="match status" value="1"/>
</dbReference>
<dbReference type="SUPFAM" id="SSF57610">
    <property type="entry name" value="Thyroglobulin type-1 domain"/>
    <property type="match status" value="1"/>
</dbReference>
<dbReference type="PROSITE" id="PS51465">
    <property type="entry name" value="KAZAL_2"/>
    <property type="match status" value="1"/>
</dbReference>
<dbReference type="PROSITE" id="PS00484">
    <property type="entry name" value="THYROGLOBULIN_1_1"/>
    <property type="match status" value="1"/>
</dbReference>
<dbReference type="PROSITE" id="PS51162">
    <property type="entry name" value="THYROGLOBULIN_1_2"/>
    <property type="match status" value="1"/>
</dbReference>
<feature type="signal peptide" evidence="2">
    <location>
        <begin position="1"/>
        <end position="21"/>
    </location>
</feature>
<feature type="chain" id="PRO_0000026699" description="Testican-1">
    <location>
        <begin position="22"/>
        <end position="439"/>
    </location>
</feature>
<feature type="domain" description="Kazal-like" evidence="4">
    <location>
        <begin position="130"/>
        <end position="182"/>
    </location>
</feature>
<feature type="domain" description="Thyroglobulin type-1" evidence="3">
    <location>
        <begin position="310"/>
        <end position="376"/>
    </location>
</feature>
<feature type="region of interest" description="Disordered" evidence="5">
    <location>
        <begin position="415"/>
        <end position="439"/>
    </location>
</feature>
<feature type="compositionally biased region" description="Acidic residues" evidence="5">
    <location>
        <begin position="422"/>
        <end position="439"/>
    </location>
</feature>
<feature type="glycosylation site" description="O-linked (GalNAc...) threonine" evidence="7">
    <location>
        <position position="228"/>
    </location>
</feature>
<feature type="glycosylation site" description="O-linked (Xyl...) (glycosaminoglycan) serine" evidence="2">
    <location>
        <position position="383"/>
    </location>
</feature>
<feature type="glycosylation site" description="O-linked (Xyl...) (glycosaminoglycan) serine" evidence="2">
    <location>
        <position position="388"/>
    </location>
</feature>
<feature type="disulfide bond" evidence="1">
    <location>
        <begin position="86"/>
        <end position="97"/>
    </location>
</feature>
<feature type="disulfide bond" evidence="1">
    <location>
        <begin position="91"/>
        <end position="107"/>
    </location>
</feature>
<feature type="disulfide bond" evidence="1">
    <location>
        <begin position="136"/>
        <end position="166"/>
    </location>
</feature>
<feature type="disulfide bond" evidence="1">
    <location>
        <begin position="139"/>
        <end position="159"/>
    </location>
</feature>
<feature type="disulfide bond" evidence="1">
    <location>
        <begin position="148"/>
        <end position="180"/>
    </location>
</feature>
<feature type="disulfide bond" evidence="1">
    <location>
        <begin position="313"/>
        <end position="337"/>
    </location>
</feature>
<feature type="disulfide bond" evidence="1">
    <location>
        <begin position="348"/>
        <end position="355"/>
    </location>
</feature>
<feature type="disulfide bond" evidence="1">
    <location>
        <begin position="357"/>
        <end position="376"/>
    </location>
</feature>
<feature type="sequence conflict" description="In Ref. 4; BAD92938." evidence="8" ref="4">
    <original>D</original>
    <variation>DEVE</variation>
    <location>
        <position position="62"/>
    </location>
</feature>
<feature type="sequence conflict" description="In Ref. 6; AAH30691." evidence="8" ref="6">
    <original>Q</original>
    <variation>K</variation>
    <location>
        <position position="77"/>
    </location>
</feature>
<name>TICN1_HUMAN</name>
<reference key="1">
    <citation type="journal article" date="1993" name="Eur. J. Biochem.">
        <title>Testican, a multidomain testicular proteoglycan resembling modulators of cell social behaviour.</title>
        <authorList>
            <person name="Alliel P.M."/>
            <person name="Perin J.-P."/>
            <person name="Jolles P."/>
            <person name="Bonnet F.J."/>
        </authorList>
    </citation>
    <scope>NUCLEOTIDE SEQUENCE [MRNA]</scope>
    <scope>PROTEIN SEQUENCE OF 344-347 AND 370-393</scope>
    <source>
        <tissue>Testis</tissue>
    </source>
</reference>
<reference key="2">
    <citation type="journal article" date="1997" name="Endothelium">
        <title>Endothelial cell expression of testican mRNA.</title>
        <authorList>
            <person name="Marr H.S."/>
            <person name="Basalamah M.A."/>
            <person name="Edgell C.J."/>
        </authorList>
    </citation>
    <scope>NUCLEOTIDE SEQUENCE [MRNA]</scope>
</reference>
<reference key="3">
    <citation type="journal article" date="2004" name="Nat. Genet.">
        <title>Complete sequencing and characterization of 21,243 full-length human cDNAs.</title>
        <authorList>
            <person name="Ota T."/>
            <person name="Suzuki Y."/>
            <person name="Nishikawa T."/>
            <person name="Otsuki T."/>
            <person name="Sugiyama T."/>
            <person name="Irie R."/>
            <person name="Wakamatsu A."/>
            <person name="Hayashi K."/>
            <person name="Sato H."/>
            <person name="Nagai K."/>
            <person name="Kimura K."/>
            <person name="Makita H."/>
            <person name="Sekine M."/>
            <person name="Obayashi M."/>
            <person name="Nishi T."/>
            <person name="Shibahara T."/>
            <person name="Tanaka T."/>
            <person name="Ishii S."/>
            <person name="Yamamoto J."/>
            <person name="Saito K."/>
            <person name="Kawai Y."/>
            <person name="Isono Y."/>
            <person name="Nakamura Y."/>
            <person name="Nagahari K."/>
            <person name="Murakami K."/>
            <person name="Yasuda T."/>
            <person name="Iwayanagi T."/>
            <person name="Wagatsuma M."/>
            <person name="Shiratori A."/>
            <person name="Sudo H."/>
            <person name="Hosoiri T."/>
            <person name="Kaku Y."/>
            <person name="Kodaira H."/>
            <person name="Kondo H."/>
            <person name="Sugawara M."/>
            <person name="Takahashi M."/>
            <person name="Kanda K."/>
            <person name="Yokoi T."/>
            <person name="Furuya T."/>
            <person name="Kikkawa E."/>
            <person name="Omura Y."/>
            <person name="Abe K."/>
            <person name="Kamihara K."/>
            <person name="Katsuta N."/>
            <person name="Sato K."/>
            <person name="Tanikawa M."/>
            <person name="Yamazaki M."/>
            <person name="Ninomiya K."/>
            <person name="Ishibashi T."/>
            <person name="Yamashita H."/>
            <person name="Murakawa K."/>
            <person name="Fujimori K."/>
            <person name="Tanai H."/>
            <person name="Kimata M."/>
            <person name="Watanabe M."/>
            <person name="Hiraoka S."/>
            <person name="Chiba Y."/>
            <person name="Ishida S."/>
            <person name="Ono Y."/>
            <person name="Takiguchi S."/>
            <person name="Watanabe S."/>
            <person name="Yosida M."/>
            <person name="Hotuta T."/>
            <person name="Kusano J."/>
            <person name="Kanehori K."/>
            <person name="Takahashi-Fujii A."/>
            <person name="Hara H."/>
            <person name="Tanase T.-O."/>
            <person name="Nomura Y."/>
            <person name="Togiya S."/>
            <person name="Komai F."/>
            <person name="Hara R."/>
            <person name="Takeuchi K."/>
            <person name="Arita M."/>
            <person name="Imose N."/>
            <person name="Musashino K."/>
            <person name="Yuuki H."/>
            <person name="Oshima A."/>
            <person name="Sasaki N."/>
            <person name="Aotsuka S."/>
            <person name="Yoshikawa Y."/>
            <person name="Matsunawa H."/>
            <person name="Ichihara T."/>
            <person name="Shiohata N."/>
            <person name="Sano S."/>
            <person name="Moriya S."/>
            <person name="Momiyama H."/>
            <person name="Satoh N."/>
            <person name="Takami S."/>
            <person name="Terashima Y."/>
            <person name="Suzuki O."/>
            <person name="Nakagawa S."/>
            <person name="Senoh A."/>
            <person name="Mizoguchi H."/>
            <person name="Goto Y."/>
            <person name="Shimizu F."/>
            <person name="Wakebe H."/>
            <person name="Hishigaki H."/>
            <person name="Watanabe T."/>
            <person name="Sugiyama A."/>
            <person name="Takemoto M."/>
            <person name="Kawakami B."/>
            <person name="Yamazaki M."/>
            <person name="Watanabe K."/>
            <person name="Kumagai A."/>
            <person name="Itakura S."/>
            <person name="Fukuzumi Y."/>
            <person name="Fujimori Y."/>
            <person name="Komiyama M."/>
            <person name="Tashiro H."/>
            <person name="Tanigami A."/>
            <person name="Fujiwara T."/>
            <person name="Ono T."/>
            <person name="Yamada K."/>
            <person name="Fujii Y."/>
            <person name="Ozaki K."/>
            <person name="Hirao M."/>
            <person name="Ohmori Y."/>
            <person name="Kawabata A."/>
            <person name="Hikiji T."/>
            <person name="Kobatake N."/>
            <person name="Inagaki H."/>
            <person name="Ikema Y."/>
            <person name="Okamoto S."/>
            <person name="Okitani R."/>
            <person name="Kawakami T."/>
            <person name="Noguchi S."/>
            <person name="Itoh T."/>
            <person name="Shigeta K."/>
            <person name="Senba T."/>
            <person name="Matsumura K."/>
            <person name="Nakajima Y."/>
            <person name="Mizuno T."/>
            <person name="Morinaga M."/>
            <person name="Sasaki M."/>
            <person name="Togashi T."/>
            <person name="Oyama M."/>
            <person name="Hata H."/>
            <person name="Watanabe M."/>
            <person name="Komatsu T."/>
            <person name="Mizushima-Sugano J."/>
            <person name="Satoh T."/>
            <person name="Shirai Y."/>
            <person name="Takahashi Y."/>
            <person name="Nakagawa K."/>
            <person name="Okumura K."/>
            <person name="Nagase T."/>
            <person name="Nomura N."/>
            <person name="Kikuchi H."/>
            <person name="Masuho Y."/>
            <person name="Yamashita R."/>
            <person name="Nakai K."/>
            <person name="Yada T."/>
            <person name="Nakamura Y."/>
            <person name="Ohara O."/>
            <person name="Isogai T."/>
            <person name="Sugano S."/>
        </authorList>
    </citation>
    <scope>NUCLEOTIDE SEQUENCE [LARGE SCALE MRNA]</scope>
    <source>
        <tissue>Cerebellum</tissue>
    </source>
</reference>
<reference key="4">
    <citation type="submission" date="2005-03" db="EMBL/GenBank/DDBJ databases">
        <authorList>
            <person name="Totoki Y."/>
            <person name="Toyoda A."/>
            <person name="Takeda T."/>
            <person name="Sakaki Y."/>
            <person name="Tanaka A."/>
            <person name="Yokoyama S."/>
            <person name="Ohara O."/>
            <person name="Nagase T."/>
            <person name="Kikuno R.F."/>
        </authorList>
    </citation>
    <scope>NUCLEOTIDE SEQUENCE [LARGE SCALE MRNA]</scope>
    <source>
        <tissue>Brain</tissue>
    </source>
</reference>
<reference key="5">
    <citation type="journal article" date="2004" name="Nature">
        <title>The DNA sequence and comparative analysis of human chromosome 5.</title>
        <authorList>
            <person name="Schmutz J."/>
            <person name="Martin J."/>
            <person name="Terry A."/>
            <person name="Couronne O."/>
            <person name="Grimwood J."/>
            <person name="Lowry S."/>
            <person name="Gordon L.A."/>
            <person name="Scott D."/>
            <person name="Xie G."/>
            <person name="Huang W."/>
            <person name="Hellsten U."/>
            <person name="Tran-Gyamfi M."/>
            <person name="She X."/>
            <person name="Prabhakar S."/>
            <person name="Aerts A."/>
            <person name="Altherr M."/>
            <person name="Bajorek E."/>
            <person name="Black S."/>
            <person name="Branscomb E."/>
            <person name="Caoile C."/>
            <person name="Challacombe J.F."/>
            <person name="Chan Y.M."/>
            <person name="Denys M."/>
            <person name="Detter J.C."/>
            <person name="Escobar J."/>
            <person name="Flowers D."/>
            <person name="Fotopulos D."/>
            <person name="Glavina T."/>
            <person name="Gomez M."/>
            <person name="Gonzales E."/>
            <person name="Goodstein D."/>
            <person name="Grigoriev I."/>
            <person name="Groza M."/>
            <person name="Hammon N."/>
            <person name="Hawkins T."/>
            <person name="Haydu L."/>
            <person name="Israni S."/>
            <person name="Jett J."/>
            <person name="Kadner K."/>
            <person name="Kimball H."/>
            <person name="Kobayashi A."/>
            <person name="Lopez F."/>
            <person name="Lou Y."/>
            <person name="Martinez D."/>
            <person name="Medina C."/>
            <person name="Morgan J."/>
            <person name="Nandkeshwar R."/>
            <person name="Noonan J.P."/>
            <person name="Pitluck S."/>
            <person name="Pollard M."/>
            <person name="Predki P."/>
            <person name="Priest J."/>
            <person name="Ramirez L."/>
            <person name="Retterer J."/>
            <person name="Rodriguez A."/>
            <person name="Rogers S."/>
            <person name="Salamov A."/>
            <person name="Salazar A."/>
            <person name="Thayer N."/>
            <person name="Tice H."/>
            <person name="Tsai M."/>
            <person name="Ustaszewska A."/>
            <person name="Vo N."/>
            <person name="Wheeler J."/>
            <person name="Wu K."/>
            <person name="Yang J."/>
            <person name="Dickson M."/>
            <person name="Cheng J.-F."/>
            <person name="Eichler E.E."/>
            <person name="Olsen A."/>
            <person name="Pennacchio L.A."/>
            <person name="Rokhsar D.S."/>
            <person name="Richardson P."/>
            <person name="Lucas S.M."/>
            <person name="Myers R.M."/>
            <person name="Rubin E.M."/>
        </authorList>
    </citation>
    <scope>NUCLEOTIDE SEQUENCE [LARGE SCALE GENOMIC DNA]</scope>
</reference>
<reference key="6">
    <citation type="journal article" date="2004" name="Genome Res.">
        <title>The status, quality, and expansion of the NIH full-length cDNA project: the Mammalian Gene Collection (MGC).</title>
        <authorList>
            <consortium name="The MGC Project Team"/>
        </authorList>
    </citation>
    <scope>NUCLEOTIDE SEQUENCE [LARGE SCALE MRNA]</scope>
    <source>
        <tissue>Hippocampus</tissue>
    </source>
</reference>
<reference key="7">
    <citation type="journal article" date="1992" name="Biochem. J.">
        <title>Characterization of a human seminal plasma glycosaminoglycan-bearing polypeptide.</title>
        <authorList>
            <person name="Bonnet F."/>
            <person name="Perin J.-P."/>
            <person name="Maillet P."/>
            <person name="Jolles P."/>
            <person name="Alliel P.M."/>
        </authorList>
    </citation>
    <scope>PROTEIN SEQUENCE OF 370-392</scope>
    <scope>GLYCOSYLATION</scope>
    <scope>STRUCTURE OF CARBOHYDRATES</scope>
    <source>
        <tissue>Seminal plasma</tissue>
    </source>
</reference>
<reference key="8">
    <citation type="journal article" date="2013" name="J. Proteome Res.">
        <title>LC-MS/MS characterization of O-glycosylation sites and glycan structures of human cerebrospinal fluid glycoproteins.</title>
        <authorList>
            <person name="Halim A."/>
            <person name="Ruetschi U."/>
            <person name="Larson G."/>
            <person name="Nilsson J."/>
        </authorList>
    </citation>
    <scope>GLYCOSYLATION AT THR-228</scope>
    <scope>IDENTIFICATION BY MASS SPECTROMETRY</scope>
</reference>
<accession>Q08629</accession>
<accession>B3KSW3</accession>
<accession>Q59EW0</accession>
<accession>Q8N630</accession>
<accession>Q9UCL8</accession>
<gene>
    <name type="primary">SPOCK1</name>
    <name type="synonym">SPOCK</name>
    <name type="synonym">TIC1</name>
    <name type="synonym">TICN1</name>
</gene>
<protein>
    <recommendedName>
        <fullName>Testican-1</fullName>
    </recommendedName>
    <alternativeName>
        <fullName>Protein SPOCK</fullName>
    </alternativeName>
</protein>